<organism>
    <name type="scientific">Arabidopsis thaliana</name>
    <name type="common">Mouse-ear cress</name>
    <dbReference type="NCBI Taxonomy" id="3702"/>
    <lineage>
        <taxon>Eukaryota</taxon>
        <taxon>Viridiplantae</taxon>
        <taxon>Streptophyta</taxon>
        <taxon>Embryophyta</taxon>
        <taxon>Tracheophyta</taxon>
        <taxon>Spermatophyta</taxon>
        <taxon>Magnoliopsida</taxon>
        <taxon>eudicotyledons</taxon>
        <taxon>Gunneridae</taxon>
        <taxon>Pentapetalae</taxon>
        <taxon>rosids</taxon>
        <taxon>malvids</taxon>
        <taxon>Brassicales</taxon>
        <taxon>Brassicaceae</taxon>
        <taxon>Camelineae</taxon>
        <taxon>Arabidopsis</taxon>
    </lineage>
</organism>
<feature type="chain" id="PRO_0000122525" description="Sucrose transport protein SUC4">
    <location>
        <begin position="1"/>
        <end position="510"/>
    </location>
</feature>
<feature type="topological domain" description="Cytoplasmic" evidence="2">
    <location>
        <begin position="1"/>
        <end position="45"/>
    </location>
</feature>
<feature type="transmembrane region" description="Helical" evidence="2">
    <location>
        <begin position="46"/>
        <end position="66"/>
    </location>
</feature>
<feature type="topological domain" description="Extracellular" evidence="2">
    <location>
        <begin position="67"/>
        <end position="71"/>
    </location>
</feature>
<feature type="transmembrane region" description="Helical" evidence="2">
    <location>
        <begin position="72"/>
        <end position="92"/>
    </location>
</feature>
<feature type="topological domain" description="Cytoplasmic" evidence="2">
    <location>
        <begin position="93"/>
        <end position="111"/>
    </location>
</feature>
<feature type="transmembrane region" description="Helical" evidence="2">
    <location>
        <begin position="112"/>
        <end position="132"/>
    </location>
</feature>
<feature type="topological domain" description="Extracellular" evidence="2">
    <location>
        <begin position="133"/>
        <end position="148"/>
    </location>
</feature>
<feature type="transmembrane region" description="Helical" evidence="2">
    <location>
        <begin position="149"/>
        <end position="169"/>
    </location>
</feature>
<feature type="topological domain" description="Cytoplasmic" evidence="2">
    <location>
        <begin position="170"/>
        <end position="187"/>
    </location>
</feature>
<feature type="transmembrane region" description="Helical" evidence="2">
    <location>
        <begin position="188"/>
        <end position="208"/>
    </location>
</feature>
<feature type="topological domain" description="Extracellular" evidence="2">
    <location>
        <begin position="209"/>
        <end position="233"/>
    </location>
</feature>
<feature type="transmembrane region" description="Helical" evidence="2">
    <location>
        <begin position="234"/>
        <end position="254"/>
    </location>
</feature>
<feature type="topological domain" description="Cytoplasmic" evidence="2">
    <location>
        <begin position="255"/>
        <end position="291"/>
    </location>
</feature>
<feature type="transmembrane region" description="Helical" evidence="2">
    <location>
        <begin position="292"/>
        <end position="312"/>
    </location>
</feature>
<feature type="topological domain" description="Extracellular" evidence="2">
    <location>
        <begin position="313"/>
        <end position="335"/>
    </location>
</feature>
<feature type="transmembrane region" description="Helical" evidence="2">
    <location>
        <begin position="336"/>
        <end position="356"/>
    </location>
</feature>
<feature type="topological domain" description="Cytoplasmic" evidence="2">
    <location>
        <begin position="357"/>
        <end position="365"/>
    </location>
</feature>
<feature type="transmembrane region" description="Helical" evidence="2">
    <location>
        <begin position="366"/>
        <end position="386"/>
    </location>
</feature>
<feature type="topological domain" description="Extracellular" evidence="2">
    <location>
        <begin position="387"/>
        <end position="402"/>
    </location>
</feature>
<feature type="transmembrane region" description="Helical" evidence="2">
    <location>
        <begin position="403"/>
        <end position="423"/>
    </location>
</feature>
<feature type="topological domain" description="Cytoplasmic" evidence="2">
    <location>
        <begin position="424"/>
        <end position="443"/>
    </location>
</feature>
<feature type="transmembrane region" description="Helical" evidence="2">
    <location>
        <begin position="444"/>
        <end position="464"/>
    </location>
</feature>
<feature type="topological domain" description="Extracellular" evidence="2">
    <location>
        <begin position="465"/>
        <end position="477"/>
    </location>
</feature>
<feature type="transmembrane region" description="Helical" evidence="2">
    <location>
        <begin position="478"/>
        <end position="498"/>
    </location>
</feature>
<feature type="topological domain" description="Cytoplasmic" evidence="2">
    <location>
        <begin position="499"/>
        <end position="510"/>
    </location>
</feature>
<feature type="region of interest" description="Disordered" evidence="3">
    <location>
        <begin position="1"/>
        <end position="34"/>
    </location>
</feature>
<feature type="compositionally biased region" description="Low complexity" evidence="3">
    <location>
        <begin position="21"/>
        <end position="34"/>
    </location>
</feature>
<feature type="modified residue" description="Phosphoserine" evidence="1">
    <location>
        <position position="23"/>
    </location>
</feature>
<feature type="sequence conflict" description="In Ref. 1; AAG09192/AAG09191." evidence="11" ref="1">
    <original>V</original>
    <variation>A</variation>
    <location>
        <position position="12"/>
    </location>
</feature>
<feature type="sequence conflict" description="In Ref. 1; AAG09192/AAG09191." evidence="11" ref="1">
    <original>A</original>
    <variation>P</variation>
    <location>
        <position position="20"/>
    </location>
</feature>
<feature type="sequence conflict" description="In Ref. 1; AAG09192/AAG09191." evidence="11" ref="1">
    <original>T</original>
    <variation>N</variation>
    <location>
        <position position="24"/>
    </location>
</feature>
<feature type="sequence conflict" description="In Ref. 1; AAG09192/AAG09191." evidence="11" ref="1">
    <original>S</original>
    <variation>P</variation>
    <location>
        <position position="32"/>
    </location>
</feature>
<feature type="sequence conflict" description="In Ref. 1; AAG09192/AAG09191." evidence="11" ref="1">
    <original>A</original>
    <variation>T</variation>
    <location>
        <position position="263"/>
    </location>
</feature>
<gene>
    <name evidence="8 10" type="primary">SUC4</name>
    <name evidence="7 9" type="synonym">SUT4</name>
    <name evidence="12" type="ordered locus">At1g09960</name>
    <name evidence="13" type="ORF">F21M12.35</name>
</gene>
<sequence length="510" mass="54784">MATSDQDRRHRVTRNRPPIARPSTSSSRPVVSPPRSKVSKRVLLRVASVACGIQFGWALQLSLLTPYVQELGIPHAWASVIWLCGPLSGLFVQPLVGHSSDRCTSKYGRRRPFIVAGAVAISISVMVIGHAADIGWAFGDREGKIKPRAIVAFVLGFWILDVANNMTQGPCRALLADLTENDNRRTRVANGYFSLFMAVGNVLGYATGSYNGWYKIFTFTKTVACNVECANLKSAFYIDVVFIAITTILSVSAAHEVPLASLASEAHGQTSGTDEAFLSEIFGTFRYFPGNVWIILLVTALTWIGWFPFILFDTDWMGREIYGGEPNIGTSYSAGVSMGALGLMLNSVFLGITSVLMEKLCRKWGAGFVWGISNILMAICFLGMIITSFVASHLGYIGHEQPPASIVFAAVLIFTILGIPLAITYSVPYALISIRIESLGLGQGLSLGVLNLAIVIPQVIVSVGSGPWDQLFGGGNSPALAVGAATGFIGGIVAILALPRTRIQKPIPLP</sequence>
<comment type="function">
    <text evidence="4">Responsible for the transport of sucrose into the cell, with the concomitant uptake of protons (symport system) (PubMed:10948254). Can also transport maltose at a lesser rate. May also transport biotin (PubMed:10948254).</text>
</comment>
<comment type="catalytic activity">
    <reaction evidence="4">
        <text>sucrose(out) + H(+)(out) = sucrose(in) + H(+)(in)</text>
        <dbReference type="Rhea" id="RHEA:72187"/>
        <dbReference type="ChEBI" id="CHEBI:15378"/>
        <dbReference type="ChEBI" id="CHEBI:17992"/>
    </reaction>
    <physiologicalReaction direction="left-to-right" evidence="4">
        <dbReference type="Rhea" id="RHEA:72188"/>
    </physiologicalReaction>
</comment>
<comment type="biophysicochemical properties">
    <kinetics>
        <KM evidence="4">12 mM for sucrose (at pH 4 and 30 degrees Celsius)</KM>
        <KM evidence="4">6 mM for sucrose (at pH 5.5 and 30 degrees Celsius)</KM>
    </kinetics>
    <phDependence>
        <text evidence="4">Optimum pH is 4-5.</text>
    </phDependence>
</comment>
<comment type="pathway">
    <text>Glycan biosynthesis; sucrose metabolism.</text>
</comment>
<comment type="subunit">
    <text evidence="6">Homodimer. Interacts with SUC2 and SUC3.</text>
</comment>
<comment type="subcellular location">
    <subcellularLocation>
        <location evidence="11">Cell membrane</location>
        <topology evidence="11">Multi-pass membrane protein</topology>
    </subcellularLocation>
</comment>
<comment type="tissue specificity">
    <text evidence="4 6">Expressed in sink tissues, mostly in minor veins of sink leaves. Localized in companion cells.</text>
</comment>
<comment type="developmental stage">
    <text evidence="4">Also present in inflorescence axil branches and in anther and pistil of developing flowers (PubMed:10948254). At anthesis, restricted to anthers (PubMed:10948254).</text>
</comment>
<comment type="induction">
    <text evidence="5">Specifically induced by H.schachtii (cyst nematodes) in nematode-induced syncytia.</text>
</comment>
<comment type="similarity">
    <text evidence="11">Belongs to the glycoside-pentoside-hexuronide (GPH) cation symporter transporter (TC 2.A.2.4) family.</text>
</comment>
<comment type="sequence caution" evidence="11">
    <conflict type="erroneous gene model prediction">
        <sequence resource="EMBL-CDS" id="AAB60751"/>
    </conflict>
</comment>
<dbReference type="EMBL" id="AF175322">
    <property type="protein sequence ID" value="AAG09192.1"/>
    <property type="molecule type" value="Genomic_DNA"/>
</dbReference>
<dbReference type="EMBL" id="AF175321">
    <property type="protein sequence ID" value="AAG09191.1"/>
    <property type="molecule type" value="mRNA"/>
</dbReference>
<dbReference type="EMBL" id="AJ289166">
    <property type="protein sequence ID" value="CAB92308.1"/>
    <property type="molecule type" value="mRNA"/>
</dbReference>
<dbReference type="EMBL" id="AC000132">
    <property type="protein sequence ID" value="AAB60751.1"/>
    <property type="status" value="ALT_SEQ"/>
    <property type="molecule type" value="Genomic_DNA"/>
</dbReference>
<dbReference type="EMBL" id="CP002684">
    <property type="protein sequence ID" value="AEE28521.1"/>
    <property type="molecule type" value="Genomic_DNA"/>
</dbReference>
<dbReference type="EMBL" id="AY072092">
    <property type="protein sequence ID" value="AAL59915.1"/>
    <property type="molecule type" value="mRNA"/>
</dbReference>
<dbReference type="EMBL" id="BT004418">
    <property type="protein sequence ID" value="AAO42412.1"/>
    <property type="molecule type" value="mRNA"/>
</dbReference>
<dbReference type="PIR" id="A86234">
    <property type="entry name" value="A86234"/>
</dbReference>
<dbReference type="RefSeq" id="NP_172467.1">
    <property type="nucleotide sequence ID" value="NM_100870.3"/>
</dbReference>
<dbReference type="SMR" id="Q9FE59"/>
<dbReference type="BioGRID" id="22771">
    <property type="interactions" value="17"/>
</dbReference>
<dbReference type="FunCoup" id="Q9FE59">
    <property type="interactions" value="1388"/>
</dbReference>
<dbReference type="IntAct" id="Q9FE59">
    <property type="interactions" value="10"/>
</dbReference>
<dbReference type="STRING" id="3702.Q9FE59"/>
<dbReference type="TCDB" id="2.A.2.4.6">
    <property type="family name" value="the glycoside-pentoside-hexuronide (gph):cation symporter family"/>
</dbReference>
<dbReference type="PaxDb" id="3702-AT1G09960.1"/>
<dbReference type="ProteomicsDB" id="228279"/>
<dbReference type="EnsemblPlants" id="AT1G09960.1">
    <property type="protein sequence ID" value="AT1G09960.1"/>
    <property type="gene ID" value="AT1G09960"/>
</dbReference>
<dbReference type="GeneID" id="837530"/>
<dbReference type="Gramene" id="AT1G09960.1">
    <property type="protein sequence ID" value="AT1G09960.1"/>
    <property type="gene ID" value="AT1G09960"/>
</dbReference>
<dbReference type="KEGG" id="ath:AT1G09960"/>
<dbReference type="Araport" id="AT1G09960"/>
<dbReference type="TAIR" id="AT1G09960">
    <property type="gene designation" value="SUT4"/>
</dbReference>
<dbReference type="eggNOG" id="KOG0637">
    <property type="taxonomic scope" value="Eukaryota"/>
</dbReference>
<dbReference type="HOGENOM" id="CLU_025234_3_0_1"/>
<dbReference type="InParanoid" id="Q9FE59"/>
<dbReference type="OMA" id="LSMPYAM"/>
<dbReference type="OrthoDB" id="28755at2759"/>
<dbReference type="PhylomeDB" id="Q9FE59"/>
<dbReference type="UniPathway" id="UPA00238"/>
<dbReference type="PRO" id="PR:Q9FE59"/>
<dbReference type="Proteomes" id="UP000006548">
    <property type="component" value="Chromosome 1"/>
</dbReference>
<dbReference type="ExpressionAtlas" id="Q9FE59">
    <property type="expression patterns" value="baseline and differential"/>
</dbReference>
<dbReference type="GO" id="GO:0005801">
    <property type="term" value="C:cis-Golgi network"/>
    <property type="evidence" value="ECO:0000314"/>
    <property type="project" value="TAIR"/>
</dbReference>
<dbReference type="GO" id="GO:0009705">
    <property type="term" value="C:plant-type vacuole membrane"/>
    <property type="evidence" value="ECO:0007669"/>
    <property type="project" value="EnsemblPlants"/>
</dbReference>
<dbReference type="GO" id="GO:0005886">
    <property type="term" value="C:plasma membrane"/>
    <property type="evidence" value="ECO:0000314"/>
    <property type="project" value="TAIR"/>
</dbReference>
<dbReference type="GO" id="GO:0005773">
    <property type="term" value="C:vacuole"/>
    <property type="evidence" value="ECO:0000314"/>
    <property type="project" value="TAIR"/>
</dbReference>
<dbReference type="GO" id="GO:0008515">
    <property type="term" value="F:sucrose transmembrane transporter activity"/>
    <property type="evidence" value="ECO:0000315"/>
    <property type="project" value="TAIR"/>
</dbReference>
<dbReference type="GO" id="GO:0015293">
    <property type="term" value="F:symporter activity"/>
    <property type="evidence" value="ECO:0007669"/>
    <property type="project" value="UniProtKB-KW"/>
</dbReference>
<dbReference type="GO" id="GO:0005985">
    <property type="term" value="P:sucrose metabolic process"/>
    <property type="evidence" value="ECO:0007669"/>
    <property type="project" value="UniProtKB-UniPathway"/>
</dbReference>
<dbReference type="CDD" id="cd17313">
    <property type="entry name" value="MFS_SLC45_SUC"/>
    <property type="match status" value="1"/>
</dbReference>
<dbReference type="FunFam" id="1.20.1250.20:FF:000174">
    <property type="entry name" value="Sucrose transport protein"/>
    <property type="match status" value="1"/>
</dbReference>
<dbReference type="Gene3D" id="1.20.1250.20">
    <property type="entry name" value="MFS general substrate transporter like domains"/>
    <property type="match status" value="1"/>
</dbReference>
<dbReference type="InterPro" id="IPR036259">
    <property type="entry name" value="MFS_trans_sf"/>
</dbReference>
<dbReference type="InterPro" id="IPR005989">
    <property type="entry name" value="Suc_symporter_pln"/>
</dbReference>
<dbReference type="NCBIfam" id="TIGR01301">
    <property type="entry name" value="GPH_sucrose"/>
    <property type="match status" value="1"/>
</dbReference>
<dbReference type="PANTHER" id="PTHR19432:SF90">
    <property type="entry name" value="SUCROSE TRANSPORT PROTEIN SUC4"/>
    <property type="match status" value="1"/>
</dbReference>
<dbReference type="PANTHER" id="PTHR19432">
    <property type="entry name" value="SUGAR TRANSPORTER"/>
    <property type="match status" value="1"/>
</dbReference>
<dbReference type="Pfam" id="PF13347">
    <property type="entry name" value="MFS_2"/>
    <property type="match status" value="1"/>
</dbReference>
<dbReference type="SUPFAM" id="SSF103473">
    <property type="entry name" value="MFS general substrate transporter"/>
    <property type="match status" value="1"/>
</dbReference>
<accession>Q9FE59</accession>
<accession>O04516</accession>
<accession>Q9M3R4</accession>
<keyword id="KW-1003">Cell membrane</keyword>
<keyword id="KW-0472">Membrane</keyword>
<keyword id="KW-0597">Phosphoprotein</keyword>
<keyword id="KW-1185">Reference proteome</keyword>
<keyword id="KW-0762">Sugar transport</keyword>
<keyword id="KW-0769">Symport</keyword>
<keyword id="KW-0812">Transmembrane</keyword>
<keyword id="KW-1133">Transmembrane helix</keyword>
<keyword id="KW-0813">Transport</keyword>
<proteinExistence type="evidence at protein level"/>
<protein>
    <recommendedName>
        <fullName evidence="8 10">Sucrose transport protein SUC4</fullName>
        <shortName evidence="8 10">AtSUC4</shortName>
    </recommendedName>
    <alternativeName>
        <fullName>Sucrose permease 4</fullName>
    </alternativeName>
    <alternativeName>
        <fullName evidence="7 9">Sucrose transporter 4</fullName>
    </alternativeName>
    <alternativeName>
        <fullName evidence="8 10">Sucrose-proton symporter 4</fullName>
    </alternativeName>
</protein>
<reference key="1">
    <citation type="journal article" date="2000" name="Plant Cell">
        <title>A new subfamily of sucrose transporters, SUT4, with low affinity/high capacity localized in enucleate sieve elements of plants.</title>
        <authorList>
            <person name="Weise A."/>
            <person name="Barker L."/>
            <person name="Kuehn C."/>
            <person name="Lalonde S."/>
            <person name="Buschmann H."/>
            <person name="Frommer W.B."/>
            <person name="Ward J.M."/>
        </authorList>
    </citation>
    <scope>NUCLEOTIDE SEQUENCE [GENOMIC DNA / MRNA]</scope>
    <scope>FUNCTION</scope>
    <scope>TISSUE SPECIFICITY</scope>
    <scope>DEVELOPMENTAL STAGE</scope>
    <scope>BIOPHYSICOCHEMICAL PROPERTIES</scope>
    <scope>TRANSPORTER ACTIVITY</scope>
    <source>
        <strain>cv. Landsberg erecta</strain>
    </source>
</reference>
<reference key="2">
    <citation type="submission" date="2000-05" db="EMBL/GenBank/DDBJ databases">
        <authorList>
            <person name="Sauer N.K."/>
        </authorList>
    </citation>
    <scope>NUCLEOTIDE SEQUENCE [MRNA]</scope>
</reference>
<reference key="3">
    <citation type="journal article" date="2000" name="Nature">
        <title>Sequence and analysis of chromosome 1 of the plant Arabidopsis thaliana.</title>
        <authorList>
            <person name="Theologis A."/>
            <person name="Ecker J.R."/>
            <person name="Palm C.J."/>
            <person name="Federspiel N.A."/>
            <person name="Kaul S."/>
            <person name="White O."/>
            <person name="Alonso J."/>
            <person name="Altafi H."/>
            <person name="Araujo R."/>
            <person name="Bowman C.L."/>
            <person name="Brooks S.Y."/>
            <person name="Buehler E."/>
            <person name="Chan A."/>
            <person name="Chao Q."/>
            <person name="Chen H."/>
            <person name="Cheuk R.F."/>
            <person name="Chin C.W."/>
            <person name="Chung M.K."/>
            <person name="Conn L."/>
            <person name="Conway A.B."/>
            <person name="Conway A.R."/>
            <person name="Creasy T.H."/>
            <person name="Dewar K."/>
            <person name="Dunn P."/>
            <person name="Etgu P."/>
            <person name="Feldblyum T.V."/>
            <person name="Feng J.-D."/>
            <person name="Fong B."/>
            <person name="Fujii C.Y."/>
            <person name="Gill J.E."/>
            <person name="Goldsmith A.D."/>
            <person name="Haas B."/>
            <person name="Hansen N.F."/>
            <person name="Hughes B."/>
            <person name="Huizar L."/>
            <person name="Hunter J.L."/>
            <person name="Jenkins J."/>
            <person name="Johnson-Hopson C."/>
            <person name="Khan S."/>
            <person name="Khaykin E."/>
            <person name="Kim C.J."/>
            <person name="Koo H.L."/>
            <person name="Kremenetskaia I."/>
            <person name="Kurtz D.B."/>
            <person name="Kwan A."/>
            <person name="Lam B."/>
            <person name="Langin-Hooper S."/>
            <person name="Lee A."/>
            <person name="Lee J.M."/>
            <person name="Lenz C.A."/>
            <person name="Li J.H."/>
            <person name="Li Y.-P."/>
            <person name="Lin X."/>
            <person name="Liu S.X."/>
            <person name="Liu Z.A."/>
            <person name="Luros J.S."/>
            <person name="Maiti R."/>
            <person name="Marziali A."/>
            <person name="Militscher J."/>
            <person name="Miranda M."/>
            <person name="Nguyen M."/>
            <person name="Nierman W.C."/>
            <person name="Osborne B.I."/>
            <person name="Pai G."/>
            <person name="Peterson J."/>
            <person name="Pham P.K."/>
            <person name="Rizzo M."/>
            <person name="Rooney T."/>
            <person name="Rowley D."/>
            <person name="Sakano H."/>
            <person name="Salzberg S.L."/>
            <person name="Schwartz J.R."/>
            <person name="Shinn P."/>
            <person name="Southwick A.M."/>
            <person name="Sun H."/>
            <person name="Tallon L.J."/>
            <person name="Tambunga G."/>
            <person name="Toriumi M.J."/>
            <person name="Town C.D."/>
            <person name="Utterback T."/>
            <person name="Van Aken S."/>
            <person name="Vaysberg M."/>
            <person name="Vysotskaia V.S."/>
            <person name="Walker M."/>
            <person name="Wu D."/>
            <person name="Yu G."/>
            <person name="Fraser C.M."/>
            <person name="Venter J.C."/>
            <person name="Davis R.W."/>
        </authorList>
    </citation>
    <scope>NUCLEOTIDE SEQUENCE [LARGE SCALE GENOMIC DNA]</scope>
    <source>
        <strain>cv. Columbia</strain>
    </source>
</reference>
<reference key="4">
    <citation type="journal article" date="2017" name="Plant J.">
        <title>Araport11: a complete reannotation of the Arabidopsis thaliana reference genome.</title>
        <authorList>
            <person name="Cheng C.Y."/>
            <person name="Krishnakumar V."/>
            <person name="Chan A.P."/>
            <person name="Thibaud-Nissen F."/>
            <person name="Schobel S."/>
            <person name="Town C.D."/>
        </authorList>
    </citation>
    <scope>GENOME REANNOTATION</scope>
    <source>
        <strain>cv. Columbia</strain>
    </source>
</reference>
<reference key="5">
    <citation type="journal article" date="2003" name="Science">
        <title>Empirical analysis of transcriptional activity in the Arabidopsis genome.</title>
        <authorList>
            <person name="Yamada K."/>
            <person name="Lim J."/>
            <person name="Dale J.M."/>
            <person name="Chen H."/>
            <person name="Shinn P."/>
            <person name="Palm C.J."/>
            <person name="Southwick A.M."/>
            <person name="Wu H.C."/>
            <person name="Kim C.J."/>
            <person name="Nguyen M."/>
            <person name="Pham P.K."/>
            <person name="Cheuk R.F."/>
            <person name="Karlin-Newmann G."/>
            <person name="Liu S.X."/>
            <person name="Lam B."/>
            <person name="Sakano H."/>
            <person name="Wu T."/>
            <person name="Yu G."/>
            <person name="Miranda M."/>
            <person name="Quach H.L."/>
            <person name="Tripp M."/>
            <person name="Chang C.H."/>
            <person name="Lee J.M."/>
            <person name="Toriumi M.J."/>
            <person name="Chan M.M."/>
            <person name="Tang C.C."/>
            <person name="Onodera C.S."/>
            <person name="Deng J.M."/>
            <person name="Akiyama K."/>
            <person name="Ansari Y."/>
            <person name="Arakawa T."/>
            <person name="Banh J."/>
            <person name="Banno F."/>
            <person name="Bowser L."/>
            <person name="Brooks S.Y."/>
            <person name="Carninci P."/>
            <person name="Chao Q."/>
            <person name="Choy N."/>
            <person name="Enju A."/>
            <person name="Goldsmith A.D."/>
            <person name="Gurjal M."/>
            <person name="Hansen N.F."/>
            <person name="Hayashizaki Y."/>
            <person name="Johnson-Hopson C."/>
            <person name="Hsuan V.W."/>
            <person name="Iida K."/>
            <person name="Karnes M."/>
            <person name="Khan S."/>
            <person name="Koesema E."/>
            <person name="Ishida J."/>
            <person name="Jiang P.X."/>
            <person name="Jones T."/>
            <person name="Kawai J."/>
            <person name="Kamiya A."/>
            <person name="Meyers C."/>
            <person name="Nakajima M."/>
            <person name="Narusaka M."/>
            <person name="Seki M."/>
            <person name="Sakurai T."/>
            <person name="Satou M."/>
            <person name="Tamse R."/>
            <person name="Vaysberg M."/>
            <person name="Wallender E.K."/>
            <person name="Wong C."/>
            <person name="Yamamura Y."/>
            <person name="Yuan S."/>
            <person name="Shinozaki K."/>
            <person name="Davis R.W."/>
            <person name="Theologis A."/>
            <person name="Ecker J.R."/>
        </authorList>
    </citation>
    <scope>NUCLEOTIDE SEQUENCE [LARGE SCALE MRNA]</scope>
    <source>
        <strain>cv. Columbia</strain>
    </source>
</reference>
<reference key="6">
    <citation type="journal article" date="2003" name="BMC Biochem.">
        <title>Interactions between co-expressed Arabidopsis sucrose transporters in the split-ubiquitin system.</title>
        <authorList>
            <person name="Schulze W.X."/>
            <person name="Reinders A."/>
            <person name="Ward J."/>
            <person name="Lalonde S."/>
            <person name="Frommer W.B."/>
        </authorList>
    </citation>
    <scope>TISSUE SPECIFICITY</scope>
    <scope>HOMODIMERIZATION</scope>
    <scope>INTERACTION WITH SUC2 AND SUC3</scope>
</reference>
<reference key="7">
    <citation type="journal article" date="2003" name="Plant Physiol.">
        <title>The companion cell-specific Arabidopsis disaccharide carrier AtSUC2 is expressed in nematode-induced syncytia.</title>
        <authorList>
            <person name="Juergensen K."/>
            <person name="Scholz-Starke J."/>
            <person name="Sauer N."/>
            <person name="Hess P."/>
            <person name="van Bel A.J.E."/>
            <person name="Grundler F.M.W."/>
        </authorList>
    </citation>
    <scope>INDUCTION</scope>
</reference>
<reference key="8">
    <citation type="journal article" date="2011" name="Plant J.">
        <title>Proton-driven sucrose symport and antiport are provided by the vacuolar transporters SUC4 and TMT1/2.</title>
        <authorList>
            <person name="Schulz A."/>
            <person name="Beyhl D."/>
            <person name="Marten I."/>
            <person name="Wormit A."/>
            <person name="Neuhaus E."/>
            <person name="Poschet G."/>
            <person name="Buettner M."/>
            <person name="Schneider S."/>
            <person name="Sauer N."/>
            <person name="Hedrich R."/>
        </authorList>
    </citation>
    <scope>FUNCTION</scope>
    <scope>TRANSPORTER ACTIVITY</scope>
    <source>
        <strain>cv. Columbia</strain>
    </source>
</reference>
<name>SUC4_ARATH</name>
<evidence type="ECO:0000250" key="1">
    <source>
        <dbReference type="UniProtKB" id="Q39232"/>
    </source>
</evidence>
<evidence type="ECO:0000255" key="2"/>
<evidence type="ECO:0000256" key="3">
    <source>
        <dbReference type="SAM" id="MobiDB-lite"/>
    </source>
</evidence>
<evidence type="ECO:0000269" key="4">
    <source>
    </source>
</evidence>
<evidence type="ECO:0000269" key="5">
    <source>
    </source>
</evidence>
<evidence type="ECO:0000269" key="6">
    <source>
    </source>
</evidence>
<evidence type="ECO:0000303" key="7">
    <source>
    </source>
</evidence>
<evidence type="ECO:0000303" key="8">
    <source>
    </source>
</evidence>
<evidence type="ECO:0000303" key="9">
    <source>
    </source>
</evidence>
<evidence type="ECO:0000303" key="10">
    <source>
    </source>
</evidence>
<evidence type="ECO:0000305" key="11"/>
<evidence type="ECO:0000312" key="12">
    <source>
        <dbReference type="Araport" id="AT1G09960"/>
    </source>
</evidence>
<evidence type="ECO:0000312" key="13">
    <source>
        <dbReference type="EMBL" id="AAB60751.1"/>
    </source>
</evidence>